<proteinExistence type="evidence at protein level"/>
<accession>Q2TAY7</accession>
<accession>B4E3L0</accession>
<accession>Q9BU59</accession>
<accession>Q9HA96</accession>
<accession>Q9NVD1</accession>
<comment type="function">
    <text evidence="2 8 9 12">Involved in pre-mRNA splicing as a component of the spliceosome (PubMed:28781166). Regulates alternative splicing of the HSPG2 pre-mRNA (By similarity). Required for normal accumulation of IK (PubMed:24945353). Required for normal mitotic spindle assembly and normal progress through mitosis (By similarity).</text>
</comment>
<comment type="function">
    <text evidence="8">(Microbial infection) Required, together with IK, for normal splicing of influenza A virus NS1 pre-mRNA, which is required for the production of the exportin NS2 and for the production of influenza A virus particles. Not required for the production of VSV virus particles.</text>
</comment>
<comment type="subunit">
    <text evidence="7 8 9">Component of the spliceosome B complex (PubMed:22365833, PubMed:28781166). Interacts with IK (PubMed:22365833, PubMed:24945353, PubMed:28781166).</text>
</comment>
<comment type="subunit">
    <text evidence="7">(Microbial infection) Identified in a complex with IK and influenza A virus RNA polymerase subunits PB1 and PB2; does not directly interact with the viral proteins by itself.</text>
</comment>
<comment type="interaction">
    <interactant intactId="EBI-298027">
        <id>Q2TAY7</id>
    </interactant>
    <interactant intactId="EBI-11156432">
        <id>Q9Y5P4-2</id>
        <label>CERT1</label>
    </interactant>
    <organismsDiffer>false</organismsDiffer>
    <experiments>3</experiments>
</comment>
<comment type="interaction">
    <interactant intactId="EBI-298027">
        <id>Q2TAY7</id>
    </interactant>
    <interactant intactId="EBI-713456">
        <id>Q13123</id>
        <label>IK</label>
    </interactant>
    <organismsDiffer>false</organismsDiffer>
    <experiments>8</experiments>
</comment>
<comment type="interaction">
    <interactant intactId="EBI-298027">
        <id>Q2TAY7</id>
    </interactant>
    <interactant intactId="EBI-995714">
        <id>Q9Y605</id>
        <label>MRFAP1</label>
    </interactant>
    <organismsDiffer>false</organismsDiffer>
    <experiments>5</experiments>
</comment>
<comment type="interaction">
    <interactant intactId="EBI-298027">
        <id>Q2TAY7</id>
    </interactant>
    <interactant intactId="EBI-748896">
        <id>Q96HT8</id>
        <label>MRFAP1L1</label>
    </interactant>
    <organismsDiffer>false</organismsDiffer>
    <experiments>9</experiments>
</comment>
<comment type="interaction">
    <interactant intactId="EBI-298027">
        <id>Q2TAY7</id>
    </interactant>
    <interactant intactId="EBI-11599933">
        <id>Q4VC12</id>
        <label>MSS51</label>
    </interactant>
    <organismsDiffer>false</organismsDiffer>
    <experiments>3</experiments>
</comment>
<comment type="interaction">
    <interactant intactId="EBI-298027">
        <id>Q2TAY7</id>
    </interactant>
    <interactant intactId="EBI-748312">
        <id>P49821</id>
        <label>NDUFV1</label>
    </interactant>
    <organismsDiffer>false</organismsDiffer>
    <experiments>3</experiments>
</comment>
<comment type="interaction">
    <interactant intactId="EBI-298027">
        <id>Q2TAY7</id>
    </interactant>
    <interactant intactId="EBI-6912267">
        <id>A6NK89</id>
        <label>RASSF10</label>
    </interactant>
    <organismsDiffer>false</organismsDiffer>
    <experiments>3</experiments>
</comment>
<comment type="interaction">
    <interactant intactId="EBI-298027">
        <id>Q2TAY7</id>
    </interactant>
    <interactant intactId="EBI-3939165">
        <id>O43711</id>
        <label>TLX3</label>
    </interactant>
    <organismsDiffer>false</organismsDiffer>
    <experiments>3</experiments>
</comment>
<comment type="interaction">
    <interactant intactId="EBI-298027">
        <id>Q2TAY7</id>
    </interactant>
    <interactant intactId="EBI-720609">
        <id>O76024</id>
        <label>WFS1</label>
    </interactant>
    <organismsDiffer>false</organismsDiffer>
    <experiments>3</experiments>
</comment>
<comment type="subcellular location">
    <subcellularLocation>
        <location evidence="3">Cytoplasm</location>
    </subcellularLocation>
    <subcellularLocation>
        <location evidence="8 9">Nucleus</location>
    </subcellularLocation>
    <subcellularLocation>
        <location evidence="2">Nucleus speckle</location>
    </subcellularLocation>
    <text evidence="2">Colocalizes with SRSF1 in nuclear speckles.</text>
</comment>
<comment type="alternative products">
    <event type="alternative splicing"/>
    <isoform>
        <id>Q2TAY7-1</id>
        <name>1</name>
        <sequence type="displayed"/>
    </isoform>
    <isoform>
        <id>Q2TAY7-2</id>
        <name>2</name>
        <sequence type="described" ref="VSP_056394"/>
    </isoform>
</comment>
<comment type="domain">
    <text evidence="1">The WD repeats assemble into a seven-bladed WD propeller.</text>
</comment>
<comment type="similarity">
    <text evidence="12">Belongs to the WD repeat SMU1 family.</text>
</comment>
<protein>
    <recommendedName>
        <fullName>WD40 repeat-containing protein SMU1</fullName>
    </recommendedName>
    <alternativeName>
        <fullName>Smu-1 suppressor of mec-8 and unc-52 protein homolog</fullName>
    </alternativeName>
    <component>
        <recommendedName>
            <fullName>WD40 repeat-containing protein SMU1, N-terminally processed</fullName>
        </recommendedName>
    </component>
</protein>
<keyword id="KW-0002">3D-structure</keyword>
<keyword id="KW-0007">Acetylation</keyword>
<keyword id="KW-0025">Alternative splicing</keyword>
<keyword id="KW-0963">Cytoplasm</keyword>
<keyword id="KW-0903">Direct protein sequencing</keyword>
<keyword id="KW-0945">Host-virus interaction</keyword>
<keyword id="KW-1017">Isopeptide bond</keyword>
<keyword id="KW-0507">mRNA processing</keyword>
<keyword id="KW-0508">mRNA splicing</keyword>
<keyword id="KW-0539">Nucleus</keyword>
<keyword id="KW-1267">Proteomics identification</keyword>
<keyword id="KW-1185">Reference proteome</keyword>
<keyword id="KW-0677">Repeat</keyword>
<keyword id="KW-0832">Ubl conjugation</keyword>
<keyword id="KW-0853">WD repeat</keyword>
<evidence type="ECO:0000250" key="1">
    <source>
        <dbReference type="UniProtKB" id="G5EEG7"/>
    </source>
</evidence>
<evidence type="ECO:0000250" key="2">
    <source>
        <dbReference type="UniProtKB" id="Q76B40"/>
    </source>
</evidence>
<evidence type="ECO:0000250" key="3">
    <source>
        <dbReference type="UniProtKB" id="Q99M63"/>
    </source>
</evidence>
<evidence type="ECO:0000255" key="4"/>
<evidence type="ECO:0000255" key="5">
    <source>
        <dbReference type="PROSITE-ProRule" id="PRU00058"/>
    </source>
</evidence>
<evidence type="ECO:0000255" key="6">
    <source>
        <dbReference type="PROSITE-ProRule" id="PRU00126"/>
    </source>
</evidence>
<evidence type="ECO:0000269" key="7">
    <source>
    </source>
</evidence>
<evidence type="ECO:0000269" key="8">
    <source>
    </source>
</evidence>
<evidence type="ECO:0000269" key="9">
    <source>
    </source>
</evidence>
<evidence type="ECO:0000269" key="10">
    <source ref="4"/>
</evidence>
<evidence type="ECO:0000303" key="11">
    <source>
    </source>
</evidence>
<evidence type="ECO:0000305" key="12"/>
<evidence type="ECO:0007744" key="13">
    <source>
        <dbReference type="PDB" id="5O9Z"/>
    </source>
</evidence>
<evidence type="ECO:0007744" key="14">
    <source>
    </source>
</evidence>
<evidence type="ECO:0007744" key="15">
    <source>
    </source>
</evidence>
<evidence type="ECO:0007744" key="16">
    <source>
    </source>
</evidence>
<evidence type="ECO:0007744" key="17">
    <source>
    </source>
</evidence>
<evidence type="ECO:0007829" key="18">
    <source>
        <dbReference type="PDB" id="6Q8F"/>
    </source>
</evidence>
<evidence type="ECO:0007829" key="19">
    <source>
        <dbReference type="PDB" id="6Q8I"/>
    </source>
</evidence>
<evidence type="ECO:0007829" key="20">
    <source>
        <dbReference type="PDB" id="6Q8J"/>
    </source>
</evidence>
<reference key="1">
    <citation type="journal article" date="2004" name="Nat. Genet.">
        <title>Complete sequencing and characterization of 21,243 full-length human cDNAs.</title>
        <authorList>
            <person name="Ota T."/>
            <person name="Suzuki Y."/>
            <person name="Nishikawa T."/>
            <person name="Otsuki T."/>
            <person name="Sugiyama T."/>
            <person name="Irie R."/>
            <person name="Wakamatsu A."/>
            <person name="Hayashi K."/>
            <person name="Sato H."/>
            <person name="Nagai K."/>
            <person name="Kimura K."/>
            <person name="Makita H."/>
            <person name="Sekine M."/>
            <person name="Obayashi M."/>
            <person name="Nishi T."/>
            <person name="Shibahara T."/>
            <person name="Tanaka T."/>
            <person name="Ishii S."/>
            <person name="Yamamoto J."/>
            <person name="Saito K."/>
            <person name="Kawai Y."/>
            <person name="Isono Y."/>
            <person name="Nakamura Y."/>
            <person name="Nagahari K."/>
            <person name="Murakami K."/>
            <person name="Yasuda T."/>
            <person name="Iwayanagi T."/>
            <person name="Wagatsuma M."/>
            <person name="Shiratori A."/>
            <person name="Sudo H."/>
            <person name="Hosoiri T."/>
            <person name="Kaku Y."/>
            <person name="Kodaira H."/>
            <person name="Kondo H."/>
            <person name="Sugawara M."/>
            <person name="Takahashi M."/>
            <person name="Kanda K."/>
            <person name="Yokoi T."/>
            <person name="Furuya T."/>
            <person name="Kikkawa E."/>
            <person name="Omura Y."/>
            <person name="Abe K."/>
            <person name="Kamihara K."/>
            <person name="Katsuta N."/>
            <person name="Sato K."/>
            <person name="Tanikawa M."/>
            <person name="Yamazaki M."/>
            <person name="Ninomiya K."/>
            <person name="Ishibashi T."/>
            <person name="Yamashita H."/>
            <person name="Murakawa K."/>
            <person name="Fujimori K."/>
            <person name="Tanai H."/>
            <person name="Kimata M."/>
            <person name="Watanabe M."/>
            <person name="Hiraoka S."/>
            <person name="Chiba Y."/>
            <person name="Ishida S."/>
            <person name="Ono Y."/>
            <person name="Takiguchi S."/>
            <person name="Watanabe S."/>
            <person name="Yosida M."/>
            <person name="Hotuta T."/>
            <person name="Kusano J."/>
            <person name="Kanehori K."/>
            <person name="Takahashi-Fujii A."/>
            <person name="Hara H."/>
            <person name="Tanase T.-O."/>
            <person name="Nomura Y."/>
            <person name="Togiya S."/>
            <person name="Komai F."/>
            <person name="Hara R."/>
            <person name="Takeuchi K."/>
            <person name="Arita M."/>
            <person name="Imose N."/>
            <person name="Musashino K."/>
            <person name="Yuuki H."/>
            <person name="Oshima A."/>
            <person name="Sasaki N."/>
            <person name="Aotsuka S."/>
            <person name="Yoshikawa Y."/>
            <person name="Matsunawa H."/>
            <person name="Ichihara T."/>
            <person name="Shiohata N."/>
            <person name="Sano S."/>
            <person name="Moriya S."/>
            <person name="Momiyama H."/>
            <person name="Satoh N."/>
            <person name="Takami S."/>
            <person name="Terashima Y."/>
            <person name="Suzuki O."/>
            <person name="Nakagawa S."/>
            <person name="Senoh A."/>
            <person name="Mizoguchi H."/>
            <person name="Goto Y."/>
            <person name="Shimizu F."/>
            <person name="Wakebe H."/>
            <person name="Hishigaki H."/>
            <person name="Watanabe T."/>
            <person name="Sugiyama A."/>
            <person name="Takemoto M."/>
            <person name="Kawakami B."/>
            <person name="Yamazaki M."/>
            <person name="Watanabe K."/>
            <person name="Kumagai A."/>
            <person name="Itakura S."/>
            <person name="Fukuzumi Y."/>
            <person name="Fujimori Y."/>
            <person name="Komiyama M."/>
            <person name="Tashiro H."/>
            <person name="Tanigami A."/>
            <person name="Fujiwara T."/>
            <person name="Ono T."/>
            <person name="Yamada K."/>
            <person name="Fujii Y."/>
            <person name="Ozaki K."/>
            <person name="Hirao M."/>
            <person name="Ohmori Y."/>
            <person name="Kawabata A."/>
            <person name="Hikiji T."/>
            <person name="Kobatake N."/>
            <person name="Inagaki H."/>
            <person name="Ikema Y."/>
            <person name="Okamoto S."/>
            <person name="Okitani R."/>
            <person name="Kawakami T."/>
            <person name="Noguchi S."/>
            <person name="Itoh T."/>
            <person name="Shigeta K."/>
            <person name="Senba T."/>
            <person name="Matsumura K."/>
            <person name="Nakajima Y."/>
            <person name="Mizuno T."/>
            <person name="Morinaga M."/>
            <person name="Sasaki M."/>
            <person name="Togashi T."/>
            <person name="Oyama M."/>
            <person name="Hata H."/>
            <person name="Watanabe M."/>
            <person name="Komatsu T."/>
            <person name="Mizushima-Sugano J."/>
            <person name="Satoh T."/>
            <person name="Shirai Y."/>
            <person name="Takahashi Y."/>
            <person name="Nakagawa K."/>
            <person name="Okumura K."/>
            <person name="Nagase T."/>
            <person name="Nomura N."/>
            <person name="Kikuchi H."/>
            <person name="Masuho Y."/>
            <person name="Yamashita R."/>
            <person name="Nakai K."/>
            <person name="Yada T."/>
            <person name="Nakamura Y."/>
            <person name="Ohara O."/>
            <person name="Isogai T."/>
            <person name="Sugano S."/>
        </authorList>
    </citation>
    <scope>NUCLEOTIDE SEQUENCE [LARGE SCALE MRNA] (ISOFORMS 1 AND 2)</scope>
    <source>
        <tissue>Embryo</tissue>
        <tissue>Uterus</tissue>
    </source>
</reference>
<reference key="2">
    <citation type="journal article" date="2004" name="Nature">
        <title>DNA sequence and analysis of human chromosome 9.</title>
        <authorList>
            <person name="Humphray S.J."/>
            <person name="Oliver K."/>
            <person name="Hunt A.R."/>
            <person name="Plumb R.W."/>
            <person name="Loveland J.E."/>
            <person name="Howe K.L."/>
            <person name="Andrews T.D."/>
            <person name="Searle S."/>
            <person name="Hunt S.E."/>
            <person name="Scott C.E."/>
            <person name="Jones M.C."/>
            <person name="Ainscough R."/>
            <person name="Almeida J.P."/>
            <person name="Ambrose K.D."/>
            <person name="Ashwell R.I.S."/>
            <person name="Babbage A.K."/>
            <person name="Babbage S."/>
            <person name="Bagguley C.L."/>
            <person name="Bailey J."/>
            <person name="Banerjee R."/>
            <person name="Barker D.J."/>
            <person name="Barlow K.F."/>
            <person name="Bates K."/>
            <person name="Beasley H."/>
            <person name="Beasley O."/>
            <person name="Bird C.P."/>
            <person name="Bray-Allen S."/>
            <person name="Brown A.J."/>
            <person name="Brown J.Y."/>
            <person name="Burford D."/>
            <person name="Burrill W."/>
            <person name="Burton J."/>
            <person name="Carder C."/>
            <person name="Carter N.P."/>
            <person name="Chapman J.C."/>
            <person name="Chen Y."/>
            <person name="Clarke G."/>
            <person name="Clark S.Y."/>
            <person name="Clee C.M."/>
            <person name="Clegg S."/>
            <person name="Collier R.E."/>
            <person name="Corby N."/>
            <person name="Crosier M."/>
            <person name="Cummings A.T."/>
            <person name="Davies J."/>
            <person name="Dhami P."/>
            <person name="Dunn M."/>
            <person name="Dutta I."/>
            <person name="Dyer L.W."/>
            <person name="Earthrowl M.E."/>
            <person name="Faulkner L."/>
            <person name="Fleming C.J."/>
            <person name="Frankish A."/>
            <person name="Frankland J.A."/>
            <person name="French L."/>
            <person name="Fricker D.G."/>
            <person name="Garner P."/>
            <person name="Garnett J."/>
            <person name="Ghori J."/>
            <person name="Gilbert J.G.R."/>
            <person name="Glison C."/>
            <person name="Grafham D.V."/>
            <person name="Gribble S."/>
            <person name="Griffiths C."/>
            <person name="Griffiths-Jones S."/>
            <person name="Grocock R."/>
            <person name="Guy J."/>
            <person name="Hall R.E."/>
            <person name="Hammond S."/>
            <person name="Harley J.L."/>
            <person name="Harrison E.S.I."/>
            <person name="Hart E.A."/>
            <person name="Heath P.D."/>
            <person name="Henderson C.D."/>
            <person name="Hopkins B.L."/>
            <person name="Howard P.J."/>
            <person name="Howden P.J."/>
            <person name="Huckle E."/>
            <person name="Johnson C."/>
            <person name="Johnson D."/>
            <person name="Joy A.A."/>
            <person name="Kay M."/>
            <person name="Keenan S."/>
            <person name="Kershaw J.K."/>
            <person name="Kimberley A.M."/>
            <person name="King A."/>
            <person name="Knights A."/>
            <person name="Laird G.K."/>
            <person name="Langford C."/>
            <person name="Lawlor S."/>
            <person name="Leongamornlert D.A."/>
            <person name="Leversha M."/>
            <person name="Lloyd C."/>
            <person name="Lloyd D.M."/>
            <person name="Lovell J."/>
            <person name="Martin S."/>
            <person name="Mashreghi-Mohammadi M."/>
            <person name="Matthews L."/>
            <person name="McLaren S."/>
            <person name="McLay K.E."/>
            <person name="McMurray A."/>
            <person name="Milne S."/>
            <person name="Nickerson T."/>
            <person name="Nisbett J."/>
            <person name="Nordsiek G."/>
            <person name="Pearce A.V."/>
            <person name="Peck A.I."/>
            <person name="Porter K.M."/>
            <person name="Pandian R."/>
            <person name="Pelan S."/>
            <person name="Phillimore B."/>
            <person name="Povey S."/>
            <person name="Ramsey Y."/>
            <person name="Rand V."/>
            <person name="Scharfe M."/>
            <person name="Sehra H.K."/>
            <person name="Shownkeen R."/>
            <person name="Sims S.K."/>
            <person name="Skuce C.D."/>
            <person name="Smith M."/>
            <person name="Steward C.A."/>
            <person name="Swarbreck D."/>
            <person name="Sycamore N."/>
            <person name="Tester J."/>
            <person name="Thorpe A."/>
            <person name="Tracey A."/>
            <person name="Tromans A."/>
            <person name="Thomas D.W."/>
            <person name="Wall M."/>
            <person name="Wallis J.M."/>
            <person name="West A.P."/>
            <person name="Whitehead S.L."/>
            <person name="Willey D.L."/>
            <person name="Williams S.A."/>
            <person name="Wilming L."/>
            <person name="Wray P.W."/>
            <person name="Young L."/>
            <person name="Ashurst J.L."/>
            <person name="Coulson A."/>
            <person name="Blocker H."/>
            <person name="Durbin R.M."/>
            <person name="Sulston J.E."/>
            <person name="Hubbard T."/>
            <person name="Jackson M.J."/>
            <person name="Bentley D.R."/>
            <person name="Beck S."/>
            <person name="Rogers J."/>
            <person name="Dunham I."/>
        </authorList>
    </citation>
    <scope>NUCLEOTIDE SEQUENCE [LARGE SCALE GENOMIC DNA]</scope>
</reference>
<reference key="3">
    <citation type="journal article" date="2004" name="Genome Res.">
        <title>The status, quality, and expansion of the NIH full-length cDNA project: the Mammalian Gene Collection (MGC).</title>
        <authorList>
            <consortium name="The MGC Project Team"/>
        </authorList>
    </citation>
    <scope>NUCLEOTIDE SEQUENCE [LARGE SCALE MRNA] (ISOFORM 1)</scope>
    <source>
        <tissue>Lung</tissue>
        <tissue>Skin</tissue>
    </source>
</reference>
<reference key="4">
    <citation type="submission" date="2008-12" db="UniProtKB">
        <authorList>
            <person name="Bienvenut W.V."/>
            <person name="Zebisch A."/>
            <person name="Kolch W."/>
        </authorList>
    </citation>
    <scope>PROTEIN SEQUENCE OF 2-12; 114-123; 275-287 AND 318-332</scope>
    <scope>CLEAVAGE OF INITIATOR METHIONINE</scope>
    <scope>ACETYLATION AT SER-2</scope>
    <scope>IDENTIFICATION BY MASS SPECTROMETRY</scope>
    <source>
        <tissue>Colon carcinoma</tissue>
    </source>
</reference>
<reference key="5">
    <citation type="journal article" date="2005" name="Exp. Cell Res.">
        <title>A temperature-sensitive mutation in the WD repeat-containing protein Smu1 is related to maintenance of chromosome integrity.</title>
        <authorList>
            <person name="Sugaya K."/>
            <person name="Hongo E."/>
            <person name="Tsuji H."/>
        </authorList>
    </citation>
    <scope>IDENTIFICATION</scope>
</reference>
<reference key="6">
    <citation type="journal article" date="2009" name="Anal. Chem.">
        <title>Lys-N and trypsin cover complementary parts of the phosphoproteome in a refined SCX-based approach.</title>
        <authorList>
            <person name="Gauci S."/>
            <person name="Helbig A.O."/>
            <person name="Slijper M."/>
            <person name="Krijgsveld J."/>
            <person name="Heck A.J."/>
            <person name="Mohammed S."/>
        </authorList>
    </citation>
    <scope>ACETYLATION [LARGE SCALE ANALYSIS] AT SER-2</scope>
    <scope>CLEAVAGE OF INITIATOR METHIONINE [LARGE SCALE ANALYSIS]</scope>
    <scope>IDENTIFICATION BY MASS SPECTROMETRY [LARGE SCALE ANALYSIS]</scope>
</reference>
<reference key="7">
    <citation type="journal article" date="2011" name="BMC Syst. Biol.">
        <title>Initial characterization of the human central proteome.</title>
        <authorList>
            <person name="Burkard T.R."/>
            <person name="Planyavsky M."/>
            <person name="Kaupe I."/>
            <person name="Breitwieser F.P."/>
            <person name="Buerckstuemmer T."/>
            <person name="Bennett K.L."/>
            <person name="Superti-Furga G."/>
            <person name="Colinge J."/>
        </authorList>
    </citation>
    <scope>IDENTIFICATION BY MASS SPECTROMETRY [LARGE SCALE ANALYSIS]</scope>
</reference>
<reference key="8">
    <citation type="journal article" date="2012" name="Mol. Cell">
        <title>Dynamic protein-protein interaction wiring of the human spliceosome.</title>
        <authorList>
            <person name="Hegele A."/>
            <person name="Kamburov A."/>
            <person name="Grossmann A."/>
            <person name="Sourlis C."/>
            <person name="Wowro S."/>
            <person name="Weimann M."/>
            <person name="Will C.L."/>
            <person name="Pena V."/>
            <person name="Luehrmann R."/>
            <person name="Stelzl U."/>
        </authorList>
    </citation>
    <scope>SUBUNIT</scope>
    <scope>INTERACTION WITH IK</scope>
</reference>
<reference key="9">
    <citation type="journal article" date="2012" name="Mol. Cell. Proteomics">
        <title>Comparative large-scale characterisation of plant vs. mammal proteins reveals similar and idiosyncratic N-alpha acetylation features.</title>
        <authorList>
            <person name="Bienvenut W.V."/>
            <person name="Sumpton D."/>
            <person name="Martinez A."/>
            <person name="Lilla S."/>
            <person name="Espagne C."/>
            <person name="Meinnel T."/>
            <person name="Giglione C."/>
        </authorList>
    </citation>
    <scope>ACETYLATION [LARGE SCALE ANALYSIS] AT SER-2</scope>
    <scope>CLEAVAGE OF INITIATOR METHIONINE [LARGE SCALE ANALYSIS]</scope>
    <scope>IDENTIFICATION BY MASS SPECTROMETRY [LARGE SCALE ANALYSIS]</scope>
</reference>
<reference key="10">
    <citation type="journal article" date="2012" name="Proc. Natl. Acad. Sci. U.S.A.">
        <title>N-terminal acetylome analyses and functional insights of the N-terminal acetyltransferase NatB.</title>
        <authorList>
            <person name="Van Damme P."/>
            <person name="Lasa M."/>
            <person name="Polevoda B."/>
            <person name="Gazquez C."/>
            <person name="Elosegui-Artola A."/>
            <person name="Kim D.S."/>
            <person name="De Juan-Pardo E."/>
            <person name="Demeyer K."/>
            <person name="Hole K."/>
            <person name="Larrea E."/>
            <person name="Timmerman E."/>
            <person name="Prieto J."/>
            <person name="Arnesen T."/>
            <person name="Sherman F."/>
            <person name="Gevaert K."/>
            <person name="Aldabe R."/>
        </authorList>
    </citation>
    <scope>ACETYLATION [LARGE SCALE ANALYSIS] AT MET-1 AND SER-2</scope>
    <scope>CLEAVAGE OF INITIATOR METHIONINE [LARGE SCALE ANALYSIS]</scope>
    <scope>IDENTIFICATION BY MASS SPECTROMETRY [LARGE SCALE ANALYSIS]</scope>
</reference>
<reference key="11">
    <citation type="journal article" date="2014" name="PLoS Pathog.">
        <title>Recruitment of RED-SMU1 complex by Influenza A Virus RNA polymerase to control Viral mRNA splicing.</title>
        <authorList>
            <person name="Fournier G."/>
            <person name="Chiang C."/>
            <person name="Munier S."/>
            <person name="Tomoiu A."/>
            <person name="Demeret C."/>
            <person name="Vidalain P.O."/>
            <person name="Jacob Y."/>
            <person name="Naffakh N."/>
        </authorList>
    </citation>
    <scope>FUNCTION</scope>
    <scope>FUNCTION (MICROBIAL INFECTION)</scope>
    <scope>INTERACTION WITH IK</scope>
    <scope>IDENTIFICATION IN A COMPLEX WITH INFLUENZA A VIRUS RNA POLYMERASE SUBUNITS PB1 AND PB2 (MICROBIAL INFECTION)</scope>
    <scope>SUBCELLULAR LOCATION</scope>
</reference>
<reference key="12">
    <citation type="journal article" date="2017" name="Nat. Struct. Mol. Biol.">
        <title>Site-specific mapping of the human SUMO proteome reveals co-modification with phosphorylation.</title>
        <authorList>
            <person name="Hendriks I.A."/>
            <person name="Lyon D."/>
            <person name="Young C."/>
            <person name="Jensen L.J."/>
            <person name="Vertegaal A.C."/>
            <person name="Nielsen M.L."/>
        </authorList>
    </citation>
    <scope>SUMOYLATION [LARGE SCALE ANALYSIS] AT LYS-379</scope>
    <scope>IDENTIFICATION BY MASS SPECTROMETRY [LARGE SCALE ANALYSIS]</scope>
</reference>
<reference evidence="13" key="13">
    <citation type="journal article" date="2017" name="Cell">
        <title>Cryo-EM Structure of a Pre-catalytic Human Spliceosome Primed for Activation.</title>
        <authorList>
            <person name="Bertram K."/>
            <person name="Agafonov D.E."/>
            <person name="Dybkov O."/>
            <person name="Haselbach D."/>
            <person name="Leelaram M.N."/>
            <person name="Will C.L."/>
            <person name="Urlaub H."/>
            <person name="Kastner B."/>
            <person name="Luhrmann R."/>
            <person name="Stark H."/>
        </authorList>
    </citation>
    <scope>STRUCTURE BY ELECTRON MICROSCOPY (4.50 ANGSTROMS)</scope>
    <scope>FUNCTION</scope>
    <scope>SUBUNIT</scope>
    <scope>INTERACTION WITH IK</scope>
    <scope>SUBCELLULAR LOCATION</scope>
    <scope>IDENTIFICATION BY MASS SPECTROMETRY</scope>
</reference>
<feature type="chain" id="PRO_0000424520" description="WD40 repeat-containing protein SMU1">
    <location>
        <begin position="1"/>
        <end position="513"/>
    </location>
</feature>
<feature type="initiator methionine" description="Removed; alternate" evidence="10 14 15 16">
    <location>
        <position position="1"/>
    </location>
</feature>
<feature type="chain" id="PRO_0000237590" description="WD40 repeat-containing protein SMU1, N-terminally processed">
    <location>
        <begin position="2"/>
        <end position="513"/>
    </location>
</feature>
<feature type="domain" description="LisH" evidence="6">
    <location>
        <begin position="6"/>
        <end position="38"/>
    </location>
</feature>
<feature type="domain" description="CTLH" evidence="5">
    <location>
        <begin position="40"/>
        <end position="92"/>
    </location>
</feature>
<feature type="repeat" description="WD 1" evidence="4">
    <location>
        <begin position="212"/>
        <end position="253"/>
    </location>
</feature>
<feature type="repeat" description="WD 2" evidence="4">
    <location>
        <begin position="262"/>
        <end position="303"/>
    </location>
</feature>
<feature type="repeat" description="WD 3" evidence="4">
    <location>
        <begin position="305"/>
        <end position="346"/>
    </location>
</feature>
<feature type="repeat" description="WD 4" evidence="4">
    <location>
        <begin position="347"/>
        <end position="386"/>
    </location>
</feature>
<feature type="repeat" description="WD 5" evidence="4">
    <location>
        <begin position="395"/>
        <end position="436"/>
    </location>
</feature>
<feature type="repeat" description="WD 6" evidence="4">
    <location>
        <begin position="440"/>
        <end position="479"/>
    </location>
</feature>
<feature type="repeat" description="WD 7" evidence="4">
    <location>
        <begin position="482"/>
        <end position="513"/>
    </location>
</feature>
<feature type="region of interest" description="Required for interaction with IK and with influenza A virus RNA polymerase" evidence="8">
    <location>
        <begin position="1"/>
        <end position="315"/>
    </location>
</feature>
<feature type="modified residue" description="N-acetylmethionine" evidence="16">
    <location>
        <position position="1"/>
    </location>
</feature>
<feature type="modified residue" description="N-acetylserine; in WD40 repeat-containing protein SMU1, N-terminally processed" evidence="10 14 15 16">
    <location>
        <position position="2"/>
    </location>
</feature>
<feature type="cross-link" description="Glycyl lysine isopeptide (Lys-Gly) (interchain with G-Cter in SUMO2)" evidence="17">
    <location>
        <position position="379"/>
    </location>
</feature>
<feature type="splice variant" id="VSP_056394" description="In isoform 2." evidence="11">
    <location>
        <begin position="1"/>
        <end position="161"/>
    </location>
</feature>
<feature type="sequence conflict" description="In Ref. 3; AAI10655." evidence="12" ref="3">
    <original>A</original>
    <variation>V</variation>
    <location>
        <position position="62"/>
    </location>
</feature>
<feature type="sequence conflict" description="In Ref. 1; AK022032." evidence="12" ref="1">
    <original>I</original>
    <variation>V</variation>
    <location>
        <position position="424"/>
    </location>
</feature>
<feature type="sequence conflict" description="In Ref. 1; AK022032." evidence="12" ref="1">
    <original>G</original>
    <variation>R</variation>
    <location>
        <position position="429"/>
    </location>
</feature>
<feature type="sequence conflict" description="In Ref. 1; BAA91822." evidence="12" ref="1">
    <original>L</original>
    <variation>P</variation>
    <location>
        <position position="498"/>
    </location>
</feature>
<feature type="sequence conflict" description="In Ref. 3; AAI10655." evidence="12" ref="3">
    <original>G</original>
    <variation>A</variation>
    <location>
        <position position="506"/>
    </location>
</feature>
<feature type="strand" evidence="19">
    <location>
        <begin position="4"/>
        <end position="6"/>
    </location>
</feature>
<feature type="helix" evidence="20">
    <location>
        <begin position="7"/>
        <end position="20"/>
    </location>
</feature>
<feature type="helix" evidence="20">
    <location>
        <begin position="24"/>
        <end position="34"/>
    </location>
</feature>
<feature type="strand" evidence="19">
    <location>
        <begin position="40"/>
        <end position="42"/>
    </location>
</feature>
<feature type="helix" evidence="20">
    <location>
        <begin position="44"/>
        <end position="52"/>
    </location>
</feature>
<feature type="helix" evidence="20">
    <location>
        <begin position="56"/>
        <end position="62"/>
    </location>
</feature>
<feature type="helix" evidence="20">
    <location>
        <begin position="63"/>
        <end position="65"/>
    </location>
</feature>
<feature type="helix" evidence="20">
    <location>
        <begin position="70"/>
        <end position="86"/>
    </location>
</feature>
<feature type="helix" evidence="20">
    <location>
        <begin position="90"/>
        <end position="99"/>
    </location>
</feature>
<feature type="helix" evidence="20">
    <location>
        <begin position="101"/>
        <end position="109"/>
    </location>
</feature>
<feature type="helix" evidence="20">
    <location>
        <begin position="111"/>
        <end position="122"/>
    </location>
</feature>
<feature type="strand" evidence="20">
    <location>
        <begin position="123"/>
        <end position="125"/>
    </location>
</feature>
<feature type="helix" evidence="20">
    <location>
        <begin position="128"/>
        <end position="131"/>
    </location>
</feature>
<feature type="helix" evidence="20">
    <location>
        <begin position="138"/>
        <end position="150"/>
    </location>
</feature>
<feature type="helix" evidence="20">
    <location>
        <begin position="160"/>
        <end position="175"/>
    </location>
</feature>
<feature type="strand" evidence="19">
    <location>
        <begin position="181"/>
        <end position="184"/>
    </location>
</feature>
<feature type="strand" evidence="20">
    <location>
        <begin position="186"/>
        <end position="189"/>
    </location>
</feature>
<feature type="helix" evidence="18">
    <location>
        <begin position="193"/>
        <end position="195"/>
    </location>
</feature>
<organism>
    <name type="scientific">Homo sapiens</name>
    <name type="common">Human</name>
    <dbReference type="NCBI Taxonomy" id="9606"/>
    <lineage>
        <taxon>Eukaryota</taxon>
        <taxon>Metazoa</taxon>
        <taxon>Chordata</taxon>
        <taxon>Craniata</taxon>
        <taxon>Vertebrata</taxon>
        <taxon>Euteleostomi</taxon>
        <taxon>Mammalia</taxon>
        <taxon>Eutheria</taxon>
        <taxon>Euarchontoglires</taxon>
        <taxon>Primates</taxon>
        <taxon>Haplorrhini</taxon>
        <taxon>Catarrhini</taxon>
        <taxon>Hominidae</taxon>
        <taxon>Homo</taxon>
    </lineage>
</organism>
<dbReference type="EMBL" id="AK001667">
    <property type="protein sequence ID" value="BAA91822.1"/>
    <property type="molecule type" value="mRNA"/>
</dbReference>
<dbReference type="EMBL" id="AK022032">
    <property type="status" value="NOT_ANNOTATED_CDS"/>
    <property type="molecule type" value="mRNA"/>
</dbReference>
<dbReference type="EMBL" id="AK304767">
    <property type="protein sequence ID" value="BAG65522.1"/>
    <property type="molecule type" value="mRNA"/>
</dbReference>
<dbReference type="EMBL" id="AL162590">
    <property type="status" value="NOT_ANNOTATED_CDS"/>
    <property type="molecule type" value="Genomic_DNA"/>
</dbReference>
<dbReference type="EMBL" id="BC002876">
    <property type="protein sequence ID" value="AAH02876.1"/>
    <property type="molecule type" value="mRNA"/>
</dbReference>
<dbReference type="EMBL" id="BC110654">
    <property type="protein sequence ID" value="AAI10655.1"/>
    <property type="molecule type" value="mRNA"/>
</dbReference>
<dbReference type="CCDS" id="CCDS6534.1">
    <molecule id="Q2TAY7-1"/>
</dbReference>
<dbReference type="RefSeq" id="NP_060695.2">
    <molecule id="Q2TAY7-1"/>
    <property type="nucleotide sequence ID" value="NM_018225.3"/>
</dbReference>
<dbReference type="RefSeq" id="XP_054219191.1">
    <molecule id="Q2TAY7-1"/>
    <property type="nucleotide sequence ID" value="XM_054363216.1"/>
</dbReference>
<dbReference type="PDB" id="5O9Z">
    <property type="method" value="EM"/>
    <property type="resolution" value="4.50 A"/>
    <property type="chains" value="L=1-513"/>
</dbReference>
<dbReference type="PDB" id="6AHD">
    <property type="method" value="EM"/>
    <property type="resolution" value="3.80 A"/>
    <property type="chains" value="Y=1-513"/>
</dbReference>
<dbReference type="PDB" id="6Q8F">
    <property type="method" value="X-ray"/>
    <property type="resolution" value="1.90 A"/>
    <property type="chains" value="A/B=2-513"/>
</dbReference>
<dbReference type="PDB" id="6Q8I">
    <property type="method" value="X-ray"/>
    <property type="resolution" value="3.17 A"/>
    <property type="chains" value="A/B/E/F/I/J/M/N=2-513"/>
</dbReference>
<dbReference type="PDB" id="6Q8J">
    <property type="method" value="X-ray"/>
    <property type="resolution" value="1.80 A"/>
    <property type="chains" value="A=2-196"/>
</dbReference>
<dbReference type="PDB" id="8H6K">
    <property type="method" value="EM"/>
    <property type="resolution" value="2.70 A"/>
    <property type="chains" value="4Z=1-513"/>
</dbReference>
<dbReference type="PDB" id="8H6L">
    <property type="method" value="EM"/>
    <property type="resolution" value="2.60 A"/>
    <property type="chains" value="4Z=1-513"/>
</dbReference>
<dbReference type="PDB" id="8QO9">
    <property type="method" value="EM"/>
    <property type="resolution" value="5.29 A"/>
    <property type="chains" value="v/w=1-513"/>
</dbReference>
<dbReference type="PDB" id="8QZS">
    <property type="method" value="EM"/>
    <property type="resolution" value="4.10 A"/>
    <property type="chains" value="v/w=1-513"/>
</dbReference>
<dbReference type="PDBsum" id="5O9Z"/>
<dbReference type="PDBsum" id="6AHD"/>
<dbReference type="PDBsum" id="6Q8F"/>
<dbReference type="PDBsum" id="6Q8I"/>
<dbReference type="PDBsum" id="6Q8J"/>
<dbReference type="PDBsum" id="8H6K"/>
<dbReference type="PDBsum" id="8H6L"/>
<dbReference type="PDBsum" id="8QO9"/>
<dbReference type="PDBsum" id="8QZS"/>
<dbReference type="EMDB" id="EMD-18529"/>
<dbReference type="EMDB" id="EMD-18781"/>
<dbReference type="EMDB" id="EMD-34507"/>
<dbReference type="EMDB" id="EMD-34508"/>
<dbReference type="EMDB" id="EMD-3766"/>
<dbReference type="EMDB" id="EMD-9624"/>
<dbReference type="SMR" id="Q2TAY7"/>
<dbReference type="BioGRID" id="120528">
    <property type="interactions" value="227"/>
</dbReference>
<dbReference type="CORUM" id="Q2TAY7"/>
<dbReference type="FunCoup" id="Q2TAY7">
    <property type="interactions" value="4058"/>
</dbReference>
<dbReference type="IntAct" id="Q2TAY7">
    <property type="interactions" value="51"/>
</dbReference>
<dbReference type="MINT" id="Q2TAY7"/>
<dbReference type="STRING" id="9606.ENSP00000380336"/>
<dbReference type="GlyGen" id="Q2TAY7">
    <property type="glycosylation" value="2 sites, 1 N-linked glycan (1 site), 1 O-linked glycan (1 site)"/>
</dbReference>
<dbReference type="iPTMnet" id="Q2TAY7"/>
<dbReference type="MetOSite" id="Q2TAY7"/>
<dbReference type="PhosphoSitePlus" id="Q2TAY7"/>
<dbReference type="SwissPalm" id="Q2TAY7"/>
<dbReference type="BioMuta" id="SMU1"/>
<dbReference type="DMDM" id="109939732"/>
<dbReference type="jPOST" id="Q2TAY7"/>
<dbReference type="MassIVE" id="Q2TAY7"/>
<dbReference type="PaxDb" id="9606-ENSP00000380336"/>
<dbReference type="PeptideAtlas" id="Q2TAY7"/>
<dbReference type="ProteomicsDB" id="5908"/>
<dbReference type="ProteomicsDB" id="61473">
    <molecule id="Q2TAY7-1"/>
</dbReference>
<dbReference type="Pumba" id="Q2TAY7"/>
<dbReference type="Antibodypedia" id="10816">
    <property type="antibodies" value="112 antibodies from 24 providers"/>
</dbReference>
<dbReference type="DNASU" id="55234"/>
<dbReference type="Ensembl" id="ENST00000397149.4">
    <molecule id="Q2TAY7-1"/>
    <property type="protein sequence ID" value="ENSP00000380336.3"/>
    <property type="gene ID" value="ENSG00000122692.9"/>
</dbReference>
<dbReference type="GeneID" id="55234"/>
<dbReference type="KEGG" id="hsa:55234"/>
<dbReference type="MANE-Select" id="ENST00000397149.4">
    <property type="protein sequence ID" value="ENSP00000380336.3"/>
    <property type="RefSeq nucleotide sequence ID" value="NM_018225.3"/>
    <property type="RefSeq protein sequence ID" value="NP_060695.2"/>
</dbReference>
<dbReference type="UCSC" id="uc003zsf.2">
    <molecule id="Q2TAY7-1"/>
    <property type="organism name" value="human"/>
</dbReference>
<dbReference type="AGR" id="HGNC:18247"/>
<dbReference type="CTD" id="55234"/>
<dbReference type="DisGeNET" id="55234"/>
<dbReference type="GeneCards" id="SMU1"/>
<dbReference type="HGNC" id="HGNC:18247">
    <property type="gene designation" value="SMU1"/>
</dbReference>
<dbReference type="HPA" id="ENSG00000122692">
    <property type="expression patterns" value="Low tissue specificity"/>
</dbReference>
<dbReference type="MIM" id="617811">
    <property type="type" value="gene"/>
</dbReference>
<dbReference type="neXtProt" id="NX_Q2TAY7"/>
<dbReference type="OpenTargets" id="ENSG00000122692"/>
<dbReference type="PharmGKB" id="PA134903890"/>
<dbReference type="VEuPathDB" id="HostDB:ENSG00000122692"/>
<dbReference type="eggNOG" id="KOG0275">
    <property type="taxonomic scope" value="Eukaryota"/>
</dbReference>
<dbReference type="GeneTree" id="ENSGT00940000155007"/>
<dbReference type="HOGENOM" id="CLU_000288_57_38_1"/>
<dbReference type="InParanoid" id="Q2TAY7"/>
<dbReference type="OMA" id="MMKQQEP"/>
<dbReference type="OrthoDB" id="538223at2759"/>
<dbReference type="PAN-GO" id="Q2TAY7">
    <property type="GO annotations" value="2 GO annotations based on evolutionary models"/>
</dbReference>
<dbReference type="PhylomeDB" id="Q2TAY7"/>
<dbReference type="TreeFam" id="TF313969"/>
<dbReference type="PathwayCommons" id="Q2TAY7"/>
<dbReference type="Reactome" id="R-HSA-72163">
    <property type="pathway name" value="mRNA Splicing - Major Pathway"/>
</dbReference>
<dbReference type="SignaLink" id="Q2TAY7"/>
<dbReference type="BioGRID-ORCS" id="55234">
    <property type="hits" value="848 hits in 1127 CRISPR screens"/>
</dbReference>
<dbReference type="CD-CODE" id="DEE660B4">
    <property type="entry name" value="Stress granule"/>
</dbReference>
<dbReference type="ChiTaRS" id="SMU1">
    <property type="organism name" value="human"/>
</dbReference>
<dbReference type="GeneWiki" id="SMU1"/>
<dbReference type="GenomeRNAi" id="55234"/>
<dbReference type="Pharos" id="Q2TAY7">
    <property type="development level" value="Tbio"/>
</dbReference>
<dbReference type="PRO" id="PR:Q2TAY7"/>
<dbReference type="Proteomes" id="UP000005640">
    <property type="component" value="Chromosome 9"/>
</dbReference>
<dbReference type="RNAct" id="Q2TAY7">
    <property type="molecule type" value="protein"/>
</dbReference>
<dbReference type="Bgee" id="ENSG00000122692">
    <property type="expression patterns" value="Expressed in medial globus pallidus and 201 other cell types or tissues"/>
</dbReference>
<dbReference type="ExpressionAtlas" id="Q2TAY7">
    <property type="expression patterns" value="baseline and differential"/>
</dbReference>
<dbReference type="GO" id="GO:0005737">
    <property type="term" value="C:cytoplasm"/>
    <property type="evidence" value="ECO:0007669"/>
    <property type="project" value="UniProtKB-SubCell"/>
</dbReference>
<dbReference type="GO" id="GO:0016607">
    <property type="term" value="C:nuclear speck"/>
    <property type="evidence" value="ECO:0000250"/>
    <property type="project" value="UniProtKB"/>
</dbReference>
<dbReference type="GO" id="GO:0005654">
    <property type="term" value="C:nucleoplasm"/>
    <property type="evidence" value="ECO:0000304"/>
    <property type="project" value="Reactome"/>
</dbReference>
<dbReference type="GO" id="GO:0005634">
    <property type="term" value="C:nucleus"/>
    <property type="evidence" value="ECO:0000314"/>
    <property type="project" value="UniProtKB"/>
</dbReference>
<dbReference type="GO" id="GO:0071011">
    <property type="term" value="C:precatalytic spliceosome"/>
    <property type="evidence" value="ECO:0000318"/>
    <property type="project" value="GO_Central"/>
</dbReference>
<dbReference type="GO" id="GO:0071005">
    <property type="term" value="C:U2-type precatalytic spliceosome"/>
    <property type="evidence" value="ECO:0000314"/>
    <property type="project" value="UniProtKB"/>
</dbReference>
<dbReference type="GO" id="GO:0000398">
    <property type="term" value="P:mRNA splicing, via spliceosome"/>
    <property type="evidence" value="ECO:0000314"/>
    <property type="project" value="UniProtKB"/>
</dbReference>
<dbReference type="GO" id="GO:0000381">
    <property type="term" value="P:regulation of alternative mRNA splicing, via spliceosome"/>
    <property type="evidence" value="ECO:0000250"/>
    <property type="project" value="UniProtKB"/>
</dbReference>
<dbReference type="GO" id="GO:0008380">
    <property type="term" value="P:RNA splicing"/>
    <property type="evidence" value="ECO:0000318"/>
    <property type="project" value="GO_Central"/>
</dbReference>
<dbReference type="CDD" id="cd00200">
    <property type="entry name" value="WD40"/>
    <property type="match status" value="1"/>
</dbReference>
<dbReference type="FunFam" id="2.130.10.10:FF:000729">
    <property type="entry name" value="SMU1, DNA replication regulator and spliceosomal factor"/>
    <property type="match status" value="1"/>
</dbReference>
<dbReference type="FunFam" id="2.130.10.10:FF:000754">
    <property type="entry name" value="SMU1, DNA replication regulator and spliceosomal factor"/>
    <property type="match status" value="1"/>
</dbReference>
<dbReference type="FunFam" id="2.130.10.10:FF:000082">
    <property type="entry name" value="WD40 repeat-containing protein SMU1"/>
    <property type="match status" value="1"/>
</dbReference>
<dbReference type="Gene3D" id="2.130.10.10">
    <property type="entry name" value="YVTN repeat-like/Quinoprotein amine dehydrogenase"/>
    <property type="match status" value="3"/>
</dbReference>
<dbReference type="InterPro" id="IPR006595">
    <property type="entry name" value="CTLH_C"/>
</dbReference>
<dbReference type="InterPro" id="IPR020472">
    <property type="entry name" value="G-protein_beta_WD-40_rep"/>
</dbReference>
<dbReference type="InterPro" id="IPR006594">
    <property type="entry name" value="LisH"/>
</dbReference>
<dbReference type="InterPro" id="IPR045184">
    <property type="entry name" value="SMU1"/>
</dbReference>
<dbReference type="InterPro" id="IPR054532">
    <property type="entry name" value="TPL_SMU1_LisH-like"/>
</dbReference>
<dbReference type="InterPro" id="IPR015943">
    <property type="entry name" value="WD40/YVTN_repeat-like_dom_sf"/>
</dbReference>
<dbReference type="InterPro" id="IPR019775">
    <property type="entry name" value="WD40_repeat_CS"/>
</dbReference>
<dbReference type="InterPro" id="IPR036322">
    <property type="entry name" value="WD40_repeat_dom_sf"/>
</dbReference>
<dbReference type="InterPro" id="IPR001680">
    <property type="entry name" value="WD40_rpt"/>
</dbReference>
<dbReference type="PANTHER" id="PTHR22848">
    <property type="entry name" value="WD40 REPEAT PROTEIN"/>
    <property type="match status" value="1"/>
</dbReference>
<dbReference type="Pfam" id="PF17814">
    <property type="entry name" value="LisH_TPL"/>
    <property type="match status" value="1"/>
</dbReference>
<dbReference type="Pfam" id="PF00400">
    <property type="entry name" value="WD40"/>
    <property type="match status" value="5"/>
</dbReference>
<dbReference type="PRINTS" id="PR00320">
    <property type="entry name" value="GPROTEINBRPT"/>
</dbReference>
<dbReference type="SMART" id="SM00668">
    <property type="entry name" value="CTLH"/>
    <property type="match status" value="1"/>
</dbReference>
<dbReference type="SMART" id="SM00667">
    <property type="entry name" value="LisH"/>
    <property type="match status" value="1"/>
</dbReference>
<dbReference type="SMART" id="SM00320">
    <property type="entry name" value="WD40"/>
    <property type="match status" value="7"/>
</dbReference>
<dbReference type="SUPFAM" id="SSF50978">
    <property type="entry name" value="WD40 repeat-like"/>
    <property type="match status" value="1"/>
</dbReference>
<dbReference type="PROSITE" id="PS50897">
    <property type="entry name" value="CTLH"/>
    <property type="match status" value="1"/>
</dbReference>
<dbReference type="PROSITE" id="PS50896">
    <property type="entry name" value="LISH"/>
    <property type="match status" value="1"/>
</dbReference>
<dbReference type="PROSITE" id="PS00678">
    <property type="entry name" value="WD_REPEATS_1"/>
    <property type="match status" value="2"/>
</dbReference>
<dbReference type="PROSITE" id="PS50082">
    <property type="entry name" value="WD_REPEATS_2"/>
    <property type="match status" value="5"/>
</dbReference>
<dbReference type="PROSITE" id="PS50294">
    <property type="entry name" value="WD_REPEATS_REGION"/>
    <property type="match status" value="1"/>
</dbReference>
<sequence>MSIEIESSDVIRLIMQYLKENSLHRALATLQEETTVSLNTVDSIESFVADINSGHWDTVLQAIQSLKLPDKTLIDLYEQVVLELIELRELGAARSLLRQTDPMIMLKQTQPERYIHLENLLARSYFDPREAYPDGSSKEKRRAAIAQALAGEVSVVPPSRLMALLGQALKWQQHQGLLPPGMTIDLFRGKAAVKDVEEEKFPTQLSRHIKFGQKSHVECARFSPDGQYLVTGSVDGFIEVWNFTTGKIRKDLKYQAQDNFMMMDDAVLCMCFSRDTEMLATGAQDGKIKVWKIQSGQCLRRFERAHSKGVTCLSFSKDSSQILSASFDQTIRIHGLKSGKTLKEFRGHSSFVNEATFTQDGHYIISASSDGTVKIWNMKTTECSNTFKSLGSTAGTDITVNSVILLPKNPEHFVVCNRSNTVVIMNMQGQIVRSFSSGKREGGDFVCCALSPRGEWIYCVGEDFVLYCFSTVTGKLERTLTVHEKDVIGIAHHPHQNLIATYSEDGLLKLWKP</sequence>
<gene>
    <name type="primary">SMU1</name>
</gene>
<name>SMU1_HUMAN</name>